<reference key="1">
    <citation type="submission" date="2007-04" db="EMBL/GenBank/DDBJ databases">
        <title>Complete sequence of Shewanella putrefaciens CN-32.</title>
        <authorList>
            <consortium name="US DOE Joint Genome Institute"/>
            <person name="Copeland A."/>
            <person name="Lucas S."/>
            <person name="Lapidus A."/>
            <person name="Barry K."/>
            <person name="Detter J.C."/>
            <person name="Glavina del Rio T."/>
            <person name="Hammon N."/>
            <person name="Israni S."/>
            <person name="Dalin E."/>
            <person name="Tice H."/>
            <person name="Pitluck S."/>
            <person name="Chain P."/>
            <person name="Malfatti S."/>
            <person name="Shin M."/>
            <person name="Vergez L."/>
            <person name="Schmutz J."/>
            <person name="Larimer F."/>
            <person name="Land M."/>
            <person name="Hauser L."/>
            <person name="Kyrpides N."/>
            <person name="Mikhailova N."/>
            <person name="Romine M.F."/>
            <person name="Fredrickson J."/>
            <person name="Tiedje J."/>
            <person name="Richardson P."/>
        </authorList>
    </citation>
    <scope>NUCLEOTIDE SEQUENCE [LARGE SCALE GENOMIC DNA]</scope>
    <source>
        <strain>CN-32 / ATCC BAA-453</strain>
    </source>
</reference>
<protein>
    <recommendedName>
        <fullName evidence="1">Chromosomal replication initiator protein DnaA</fullName>
    </recommendedName>
</protein>
<sequence length="461" mass="52238">MAVSLWQQCIGRLQDELPAQQFSMWIRPLQAEMDGDTLVLYAPNRFVLDWVREKYINIINQFFTEQMGSDAPKLRFDIGSRPSAKKFEPAPVATVRAPNTQTKATVGTYFNTQAEPIANANHRSNINPTYQFDNFVEGKSNQLGKAAALQVAENPGGAYNPLFLYGGTGLGKTHLLHAVGNGIIKNNPNAKVVYMHSERFVQDMVKALQNNAIEEFKRYYRSVDALFIDDIQFFANKDRSQEEFFHTFNALLEGNHQIILTSDRYPKEIDGVEDRLKSRFGWGLTVAIEPPELETRVAILMRKAQESGINLPDEVAFFIAKRLRSNVRELEGALNRVIANANFTGRPITIDFVREALRDLLALQEKLVTIDNIQKTVAEYYKIKMADMLSKRRSRSVARPRQVAMALSKELTNQSLPEIGDAFGGRDHTTVLHACRKIAQLREESHDIKEDYANLIRTLSS</sequence>
<comment type="function">
    <text evidence="1">Plays an essential role in the initiation and regulation of chromosomal replication. ATP-DnaA binds to the origin of replication (oriC) to initiate formation of the DNA replication initiation complex once per cell cycle. Binds the DnaA box (a 9 base pair repeat at the origin) and separates the double-stranded (ds)DNA. Forms a right-handed helical filament on oriC DNA; dsDNA binds to the exterior of the filament while single-stranded (ss)DNA is stabiized in the filament's interior. The ATP-DnaA-oriC complex binds and stabilizes one strand of the AT-rich DNA unwinding element (DUE), permitting loading of DNA polymerase. After initiation quickly degrades to an ADP-DnaA complex that is not apt for DNA replication. Binds acidic phospholipids.</text>
</comment>
<comment type="subunit">
    <text evidence="1">Oligomerizes as a right-handed, spiral filament on DNA at oriC.</text>
</comment>
<comment type="subcellular location">
    <subcellularLocation>
        <location evidence="1">Cytoplasm</location>
    </subcellularLocation>
</comment>
<comment type="domain">
    <text evidence="1">Domain I is involved in oligomerization and binding regulators, domain II is flexibile and of varying length in different bacteria, domain III forms the AAA+ region, while domain IV binds dsDNA.</text>
</comment>
<comment type="similarity">
    <text evidence="1">Belongs to the DnaA family.</text>
</comment>
<name>DNAA_SHEPC</name>
<feature type="chain" id="PRO_1000048721" description="Chromosomal replication initiator protein DnaA">
    <location>
        <begin position="1"/>
        <end position="461"/>
    </location>
</feature>
<feature type="region of interest" description="Domain I, interacts with DnaA modulators" evidence="1">
    <location>
        <begin position="1"/>
        <end position="84"/>
    </location>
</feature>
<feature type="region of interest" description="Domain II" evidence="1">
    <location>
        <begin position="84"/>
        <end position="124"/>
    </location>
</feature>
<feature type="region of interest" description="Domain III, AAA+ region" evidence="1">
    <location>
        <begin position="125"/>
        <end position="341"/>
    </location>
</feature>
<feature type="region of interest" description="Domain IV, binds dsDNA" evidence="1">
    <location>
        <begin position="342"/>
        <end position="461"/>
    </location>
</feature>
<feature type="binding site" evidence="1">
    <location>
        <position position="169"/>
    </location>
    <ligand>
        <name>ATP</name>
        <dbReference type="ChEBI" id="CHEBI:30616"/>
    </ligand>
</feature>
<feature type="binding site" evidence="1">
    <location>
        <position position="171"/>
    </location>
    <ligand>
        <name>ATP</name>
        <dbReference type="ChEBI" id="CHEBI:30616"/>
    </ligand>
</feature>
<feature type="binding site" evidence="1">
    <location>
        <position position="172"/>
    </location>
    <ligand>
        <name>ATP</name>
        <dbReference type="ChEBI" id="CHEBI:30616"/>
    </ligand>
</feature>
<feature type="binding site" evidence="1">
    <location>
        <position position="173"/>
    </location>
    <ligand>
        <name>ATP</name>
        <dbReference type="ChEBI" id="CHEBI:30616"/>
    </ligand>
</feature>
<proteinExistence type="inferred from homology"/>
<dbReference type="EMBL" id="CP000681">
    <property type="protein sequence ID" value="ABP73737.1"/>
    <property type="molecule type" value="Genomic_DNA"/>
</dbReference>
<dbReference type="SMR" id="A4Y1A4"/>
<dbReference type="STRING" id="319224.Sputcn32_0001"/>
<dbReference type="KEGG" id="spc:Sputcn32_0001"/>
<dbReference type="eggNOG" id="COG0593">
    <property type="taxonomic scope" value="Bacteria"/>
</dbReference>
<dbReference type="HOGENOM" id="CLU_026910_0_1_6"/>
<dbReference type="GO" id="GO:0005737">
    <property type="term" value="C:cytoplasm"/>
    <property type="evidence" value="ECO:0007669"/>
    <property type="project" value="UniProtKB-SubCell"/>
</dbReference>
<dbReference type="GO" id="GO:0005886">
    <property type="term" value="C:plasma membrane"/>
    <property type="evidence" value="ECO:0007669"/>
    <property type="project" value="TreeGrafter"/>
</dbReference>
<dbReference type="GO" id="GO:0005524">
    <property type="term" value="F:ATP binding"/>
    <property type="evidence" value="ECO:0007669"/>
    <property type="project" value="UniProtKB-UniRule"/>
</dbReference>
<dbReference type="GO" id="GO:0016887">
    <property type="term" value="F:ATP hydrolysis activity"/>
    <property type="evidence" value="ECO:0007669"/>
    <property type="project" value="InterPro"/>
</dbReference>
<dbReference type="GO" id="GO:0003688">
    <property type="term" value="F:DNA replication origin binding"/>
    <property type="evidence" value="ECO:0007669"/>
    <property type="project" value="UniProtKB-UniRule"/>
</dbReference>
<dbReference type="GO" id="GO:0008289">
    <property type="term" value="F:lipid binding"/>
    <property type="evidence" value="ECO:0007669"/>
    <property type="project" value="UniProtKB-KW"/>
</dbReference>
<dbReference type="GO" id="GO:0006270">
    <property type="term" value="P:DNA replication initiation"/>
    <property type="evidence" value="ECO:0007669"/>
    <property type="project" value="UniProtKB-UniRule"/>
</dbReference>
<dbReference type="GO" id="GO:0006275">
    <property type="term" value="P:regulation of DNA replication"/>
    <property type="evidence" value="ECO:0007669"/>
    <property type="project" value="UniProtKB-UniRule"/>
</dbReference>
<dbReference type="CDD" id="cd00009">
    <property type="entry name" value="AAA"/>
    <property type="match status" value="1"/>
</dbReference>
<dbReference type="CDD" id="cd06571">
    <property type="entry name" value="Bac_DnaA_C"/>
    <property type="match status" value="1"/>
</dbReference>
<dbReference type="FunFam" id="1.10.1750.10:FF:000001">
    <property type="entry name" value="Chromosomal replication initiator protein DnaA"/>
    <property type="match status" value="1"/>
</dbReference>
<dbReference type="FunFam" id="1.10.8.60:FF:000003">
    <property type="entry name" value="Chromosomal replication initiator protein DnaA"/>
    <property type="match status" value="1"/>
</dbReference>
<dbReference type="FunFam" id="3.30.300.180:FF:000001">
    <property type="entry name" value="Chromosomal replication initiator protein DnaA"/>
    <property type="match status" value="1"/>
</dbReference>
<dbReference type="FunFam" id="3.40.50.300:FF:000103">
    <property type="entry name" value="Chromosomal replication initiator protein DnaA"/>
    <property type="match status" value="1"/>
</dbReference>
<dbReference type="Gene3D" id="1.10.1750.10">
    <property type="match status" value="1"/>
</dbReference>
<dbReference type="Gene3D" id="1.10.8.60">
    <property type="match status" value="1"/>
</dbReference>
<dbReference type="Gene3D" id="3.30.300.180">
    <property type="match status" value="1"/>
</dbReference>
<dbReference type="Gene3D" id="3.40.50.300">
    <property type="entry name" value="P-loop containing nucleotide triphosphate hydrolases"/>
    <property type="match status" value="1"/>
</dbReference>
<dbReference type="HAMAP" id="MF_00377">
    <property type="entry name" value="DnaA_bact"/>
    <property type="match status" value="1"/>
</dbReference>
<dbReference type="InterPro" id="IPR003593">
    <property type="entry name" value="AAA+_ATPase"/>
</dbReference>
<dbReference type="InterPro" id="IPR001957">
    <property type="entry name" value="Chromosome_initiator_DnaA"/>
</dbReference>
<dbReference type="InterPro" id="IPR020591">
    <property type="entry name" value="Chromosome_initiator_DnaA-like"/>
</dbReference>
<dbReference type="InterPro" id="IPR018312">
    <property type="entry name" value="Chromosome_initiator_DnaA_CS"/>
</dbReference>
<dbReference type="InterPro" id="IPR013159">
    <property type="entry name" value="DnaA_C"/>
</dbReference>
<dbReference type="InterPro" id="IPR013317">
    <property type="entry name" value="DnaA_dom"/>
</dbReference>
<dbReference type="InterPro" id="IPR024633">
    <property type="entry name" value="DnaA_N_dom"/>
</dbReference>
<dbReference type="InterPro" id="IPR038454">
    <property type="entry name" value="DnaA_N_sf"/>
</dbReference>
<dbReference type="InterPro" id="IPR055199">
    <property type="entry name" value="Hda_lid"/>
</dbReference>
<dbReference type="InterPro" id="IPR027417">
    <property type="entry name" value="P-loop_NTPase"/>
</dbReference>
<dbReference type="InterPro" id="IPR010921">
    <property type="entry name" value="Trp_repressor/repl_initiator"/>
</dbReference>
<dbReference type="NCBIfam" id="TIGR00362">
    <property type="entry name" value="DnaA"/>
    <property type="match status" value="1"/>
</dbReference>
<dbReference type="PANTHER" id="PTHR30050">
    <property type="entry name" value="CHROMOSOMAL REPLICATION INITIATOR PROTEIN DNAA"/>
    <property type="match status" value="1"/>
</dbReference>
<dbReference type="PANTHER" id="PTHR30050:SF2">
    <property type="entry name" value="CHROMOSOMAL REPLICATION INITIATOR PROTEIN DNAA"/>
    <property type="match status" value="1"/>
</dbReference>
<dbReference type="Pfam" id="PF00308">
    <property type="entry name" value="Bac_DnaA"/>
    <property type="match status" value="1"/>
</dbReference>
<dbReference type="Pfam" id="PF08299">
    <property type="entry name" value="Bac_DnaA_C"/>
    <property type="match status" value="1"/>
</dbReference>
<dbReference type="Pfam" id="PF11638">
    <property type="entry name" value="DnaA_N"/>
    <property type="match status" value="1"/>
</dbReference>
<dbReference type="Pfam" id="PF22688">
    <property type="entry name" value="Hda_lid"/>
    <property type="match status" value="1"/>
</dbReference>
<dbReference type="PRINTS" id="PR00051">
    <property type="entry name" value="DNAA"/>
</dbReference>
<dbReference type="SMART" id="SM00382">
    <property type="entry name" value="AAA"/>
    <property type="match status" value="1"/>
</dbReference>
<dbReference type="SMART" id="SM00760">
    <property type="entry name" value="Bac_DnaA_C"/>
    <property type="match status" value="1"/>
</dbReference>
<dbReference type="SUPFAM" id="SSF52540">
    <property type="entry name" value="P-loop containing nucleoside triphosphate hydrolases"/>
    <property type="match status" value="1"/>
</dbReference>
<dbReference type="SUPFAM" id="SSF48295">
    <property type="entry name" value="TrpR-like"/>
    <property type="match status" value="1"/>
</dbReference>
<dbReference type="PROSITE" id="PS01008">
    <property type="entry name" value="DNAA"/>
    <property type="match status" value="1"/>
</dbReference>
<accession>A4Y1A4</accession>
<organism>
    <name type="scientific">Shewanella putrefaciens (strain CN-32 / ATCC BAA-453)</name>
    <dbReference type="NCBI Taxonomy" id="319224"/>
    <lineage>
        <taxon>Bacteria</taxon>
        <taxon>Pseudomonadati</taxon>
        <taxon>Pseudomonadota</taxon>
        <taxon>Gammaproteobacteria</taxon>
        <taxon>Alteromonadales</taxon>
        <taxon>Shewanellaceae</taxon>
        <taxon>Shewanella</taxon>
    </lineage>
</organism>
<gene>
    <name evidence="1" type="primary">dnaA</name>
    <name type="ordered locus">Sputcn32_0001</name>
</gene>
<keyword id="KW-0067">ATP-binding</keyword>
<keyword id="KW-0963">Cytoplasm</keyword>
<keyword id="KW-0235">DNA replication</keyword>
<keyword id="KW-0238">DNA-binding</keyword>
<keyword id="KW-0446">Lipid-binding</keyword>
<keyword id="KW-0547">Nucleotide-binding</keyword>
<evidence type="ECO:0000255" key="1">
    <source>
        <dbReference type="HAMAP-Rule" id="MF_00377"/>
    </source>
</evidence>